<reference key="1">
    <citation type="submission" date="2004-07" db="EMBL/GenBank/DDBJ databases">
        <authorList>
            <consortium name="NIH - Xenopus Gene Collection (XGC) project"/>
        </authorList>
    </citation>
    <scope>NUCLEOTIDE SEQUENCE [LARGE SCALE MRNA]</scope>
    <source>
        <tissue>Embryo</tissue>
    </source>
</reference>
<proteinExistence type="evidence at transcript level"/>
<comment type="function">
    <text evidence="2">May be involved in DNA double-strand break (DBS) repair via homologous recombination (HR). May regulate osteoblast proliferation and differentiation (By similarity).</text>
</comment>
<comment type="catalytic activity">
    <reaction>
        <text>ATP + H2O = ADP + phosphate + H(+)</text>
        <dbReference type="Rhea" id="RHEA:13065"/>
        <dbReference type="ChEBI" id="CHEBI:15377"/>
        <dbReference type="ChEBI" id="CHEBI:15378"/>
        <dbReference type="ChEBI" id="CHEBI:30616"/>
        <dbReference type="ChEBI" id="CHEBI:43474"/>
        <dbReference type="ChEBI" id="CHEBI:456216"/>
    </reaction>
</comment>
<comment type="cofactor">
    <cofactor evidence="1">
        <name>Mg(2+)</name>
        <dbReference type="ChEBI" id="CHEBI:18420"/>
    </cofactor>
</comment>
<comment type="subunit">
    <text evidence="1">Hexamer.</text>
</comment>
<comment type="subcellular location">
    <subcellularLocation>
        <location evidence="2">Nucleus</location>
    </subcellularLocation>
    <subcellularLocation>
        <location evidence="3">Cytoplasm</location>
    </subcellularLocation>
    <subcellularLocation>
        <location evidence="3">Cytoplasm</location>
        <location evidence="3">Perinuclear region</location>
    </subcellularLocation>
</comment>
<comment type="domain">
    <text evidence="2">The N-terminus is necessary for its recruitment to DNA damage sites.</text>
</comment>
<comment type="similarity">
    <text evidence="5">Belongs to the AAA ATPase family.</text>
</comment>
<organism>
    <name type="scientific">Xenopus laevis</name>
    <name type="common">African clawed frog</name>
    <dbReference type="NCBI Taxonomy" id="8355"/>
    <lineage>
        <taxon>Eukaryota</taxon>
        <taxon>Metazoa</taxon>
        <taxon>Chordata</taxon>
        <taxon>Craniata</taxon>
        <taxon>Vertebrata</taxon>
        <taxon>Euteleostomi</taxon>
        <taxon>Amphibia</taxon>
        <taxon>Batrachia</taxon>
        <taxon>Anura</taxon>
        <taxon>Pipoidea</taxon>
        <taxon>Pipidae</taxon>
        <taxon>Xenopodinae</taxon>
        <taxon>Xenopus</taxon>
        <taxon>Xenopus</taxon>
    </lineage>
</organism>
<dbReference type="EC" id="3.6.4.-"/>
<dbReference type="EMBL" id="BC077410">
    <property type="protein sequence ID" value="AAH77410.1"/>
    <property type="molecule type" value="mRNA"/>
</dbReference>
<dbReference type="RefSeq" id="NP_001086763.1">
    <property type="nucleotide sequence ID" value="NM_001093294.1"/>
</dbReference>
<dbReference type="SMR" id="Q6DDU8"/>
<dbReference type="GeneID" id="446598"/>
<dbReference type="KEGG" id="xla:446598"/>
<dbReference type="AGR" id="Xenbase:XB-GENE-1000363"/>
<dbReference type="CTD" id="446598"/>
<dbReference type="Xenbase" id="XB-GENE-1000363">
    <property type="gene designation" value="fignl1.L"/>
</dbReference>
<dbReference type="OrthoDB" id="10251136at2759"/>
<dbReference type="Proteomes" id="UP000186698">
    <property type="component" value="Chromosome 6L"/>
</dbReference>
<dbReference type="Bgee" id="446598">
    <property type="expression patterns" value="Expressed in oocyte and 19 other cell types or tissues"/>
</dbReference>
<dbReference type="GO" id="GO:0000228">
    <property type="term" value="C:nuclear chromosome"/>
    <property type="evidence" value="ECO:0000250"/>
    <property type="project" value="UniProtKB"/>
</dbReference>
<dbReference type="GO" id="GO:0048471">
    <property type="term" value="C:perinuclear region of cytoplasm"/>
    <property type="evidence" value="ECO:0007669"/>
    <property type="project" value="UniProtKB-SubCell"/>
</dbReference>
<dbReference type="GO" id="GO:0005524">
    <property type="term" value="F:ATP binding"/>
    <property type="evidence" value="ECO:0007669"/>
    <property type="project" value="UniProtKB-KW"/>
</dbReference>
<dbReference type="GO" id="GO:0016887">
    <property type="term" value="F:ATP hydrolysis activity"/>
    <property type="evidence" value="ECO:0000318"/>
    <property type="project" value="GO_Central"/>
</dbReference>
<dbReference type="GO" id="GO:0016787">
    <property type="term" value="F:hydrolase activity"/>
    <property type="evidence" value="ECO:0000250"/>
    <property type="project" value="UniProtKB"/>
</dbReference>
<dbReference type="GO" id="GO:0000287">
    <property type="term" value="F:magnesium ion binding"/>
    <property type="evidence" value="ECO:0000250"/>
    <property type="project" value="UniProtKB"/>
</dbReference>
<dbReference type="GO" id="GO:0008568">
    <property type="term" value="F:microtubule severing ATPase activity"/>
    <property type="evidence" value="ECO:0000318"/>
    <property type="project" value="GO_Central"/>
</dbReference>
<dbReference type="GO" id="GO:0046034">
    <property type="term" value="P:ATP metabolic process"/>
    <property type="evidence" value="ECO:0000250"/>
    <property type="project" value="UniProtKB"/>
</dbReference>
<dbReference type="CDD" id="cd19525">
    <property type="entry name" value="RecA-like_Figl-1"/>
    <property type="match status" value="1"/>
</dbReference>
<dbReference type="FunFam" id="1.10.8.60:FF:000022">
    <property type="entry name" value="Fidgetin like 1"/>
    <property type="match status" value="1"/>
</dbReference>
<dbReference type="FunFam" id="3.40.50.300:FF:000093">
    <property type="entry name" value="Fidgetin-like 1"/>
    <property type="match status" value="1"/>
</dbReference>
<dbReference type="Gene3D" id="1.10.8.60">
    <property type="match status" value="1"/>
</dbReference>
<dbReference type="Gene3D" id="3.40.50.300">
    <property type="entry name" value="P-loop containing nucleotide triphosphate hydrolases"/>
    <property type="match status" value="1"/>
</dbReference>
<dbReference type="InterPro" id="IPR003593">
    <property type="entry name" value="AAA+_ATPase"/>
</dbReference>
<dbReference type="InterPro" id="IPR041569">
    <property type="entry name" value="AAA_lid_3"/>
</dbReference>
<dbReference type="InterPro" id="IPR003959">
    <property type="entry name" value="ATPase_AAA_core"/>
</dbReference>
<dbReference type="InterPro" id="IPR003960">
    <property type="entry name" value="ATPase_AAA_CS"/>
</dbReference>
<dbReference type="InterPro" id="IPR047858">
    <property type="entry name" value="FIGNL1_ATPase"/>
</dbReference>
<dbReference type="InterPro" id="IPR050304">
    <property type="entry name" value="MT-severing_AAA_ATPase"/>
</dbReference>
<dbReference type="InterPro" id="IPR027417">
    <property type="entry name" value="P-loop_NTPase"/>
</dbReference>
<dbReference type="InterPro" id="IPR015415">
    <property type="entry name" value="Spast_Vps4_C"/>
</dbReference>
<dbReference type="PANTHER" id="PTHR23074">
    <property type="entry name" value="AAA DOMAIN-CONTAINING"/>
    <property type="match status" value="1"/>
</dbReference>
<dbReference type="PANTHER" id="PTHR23074:SF75">
    <property type="entry name" value="DYNEIN REGULATORY COMPLEX PROTEIN 11-RELATED"/>
    <property type="match status" value="1"/>
</dbReference>
<dbReference type="Pfam" id="PF00004">
    <property type="entry name" value="AAA"/>
    <property type="match status" value="1"/>
</dbReference>
<dbReference type="Pfam" id="PF17862">
    <property type="entry name" value="AAA_lid_3"/>
    <property type="match status" value="1"/>
</dbReference>
<dbReference type="Pfam" id="PF09336">
    <property type="entry name" value="Vps4_C"/>
    <property type="match status" value="1"/>
</dbReference>
<dbReference type="SMART" id="SM00382">
    <property type="entry name" value="AAA"/>
    <property type="match status" value="1"/>
</dbReference>
<dbReference type="SUPFAM" id="SSF52540">
    <property type="entry name" value="P-loop containing nucleoside triphosphate hydrolases"/>
    <property type="match status" value="1"/>
</dbReference>
<dbReference type="PROSITE" id="PS00674">
    <property type="entry name" value="AAA"/>
    <property type="match status" value="1"/>
</dbReference>
<accession>Q6DDU8</accession>
<evidence type="ECO:0000250" key="1"/>
<evidence type="ECO:0000250" key="2">
    <source>
        <dbReference type="UniProtKB" id="Q6PIW4"/>
    </source>
</evidence>
<evidence type="ECO:0000250" key="3">
    <source>
        <dbReference type="UniProtKB" id="Q8BPY9"/>
    </source>
</evidence>
<evidence type="ECO:0000256" key="4">
    <source>
        <dbReference type="SAM" id="MobiDB-lite"/>
    </source>
</evidence>
<evidence type="ECO:0000305" key="5"/>
<keyword id="KW-0067">ATP-binding</keyword>
<keyword id="KW-0963">Cytoplasm</keyword>
<keyword id="KW-0378">Hydrolase</keyword>
<keyword id="KW-0460">Magnesium</keyword>
<keyword id="KW-0479">Metal-binding</keyword>
<keyword id="KW-0547">Nucleotide-binding</keyword>
<keyword id="KW-0539">Nucleus</keyword>
<keyword id="KW-1185">Reference proteome</keyword>
<feature type="chain" id="PRO_0000302726" description="Fidgetin-like protein 1">
    <location>
        <begin position="1"/>
        <end position="655"/>
    </location>
</feature>
<feature type="region of interest" description="Disordered" evidence="4">
    <location>
        <begin position="289"/>
        <end position="313"/>
    </location>
</feature>
<feature type="binding site" evidence="2">
    <location>
        <position position="385"/>
    </location>
    <ligand>
        <name>ATP</name>
        <dbReference type="ChEBI" id="CHEBI:30616"/>
    </ligand>
</feature>
<feature type="binding site" evidence="2">
    <location>
        <begin position="425"/>
        <end position="430"/>
    </location>
    <ligand>
        <name>ATP</name>
        <dbReference type="ChEBI" id="CHEBI:30616"/>
    </ligand>
</feature>
<gene>
    <name type="primary">fignl1</name>
</gene>
<name>FIGL1_XENLA</name>
<sequence>MQIPETSSVHQNEWQRDVFVLSSGTCLPQQKAEVYRAHLAQIQYAWANSEISEASAVHLFKKYAEKYSAILDSDKLEIGLNNYADSILTMAKCQRNESDKWQSSLTTNNVLKLKSVQEMAEAGRRAQLSLLNSTDASVRVGNEIGTSGYSTVLAHNVLRNPSHAVPHAASSDCQIPEGSSNFLQNSKVSAFTKANTSSNTLINNSIPINTSLMQRNEVKAPTTFSTQSGPNVFSSTTSVYSGKRKACYALGDESTDIQPKPLVQRQLASKEATGDSDFKTAKEQLWVDQQKKHSNQPQRNPGPLYGGGKKSLGAARSRGLHGKFIPPLPRQEDVEDSNRKVYGQGNSEMNSTSDEHLKNIEPKMIELIMSEIMDHGPPLNWDDIAGLEFAKTTIKEIVVWPMLRPDIFTGLRGPPKGILLFGPPGTGKTLIGKCIACQSGATFFSISASSLTSKWVGEGEKMVRALFTVARCHQPAVIFIDEIDSLLSQRGEGEHESSRRIKTEFLVQLDGATTSSEDRILVVGATNRPQEIDEAARRRLVKRLYIPLPEASARKQIVVSLMSKEHCSLTEQEVEAIVLQADGFSGADMTQLCREAALGPIRSIQLMDISTITAEQVRPIAYIDFQSAFLVVRPSVSQKDLELYENWNKTFGCGR</sequence>
<protein>
    <recommendedName>
        <fullName>Fidgetin-like protein 1</fullName>
        <ecNumber>3.6.4.-</ecNumber>
    </recommendedName>
</protein>